<accession>A0K4Y3</accession>
<protein>
    <recommendedName>
        <fullName evidence="1">Transcriptional repressor NrdR</fullName>
    </recommendedName>
</protein>
<evidence type="ECO:0000255" key="1">
    <source>
        <dbReference type="HAMAP-Rule" id="MF_00440"/>
    </source>
</evidence>
<reference key="1">
    <citation type="submission" date="2006-08" db="EMBL/GenBank/DDBJ databases">
        <title>Complete sequence of chromosome 1 of Burkholderia cenocepacia HI2424.</title>
        <authorList>
            <person name="Copeland A."/>
            <person name="Lucas S."/>
            <person name="Lapidus A."/>
            <person name="Barry K."/>
            <person name="Detter J.C."/>
            <person name="Glavina del Rio T."/>
            <person name="Hammon N."/>
            <person name="Israni S."/>
            <person name="Pitluck S."/>
            <person name="Chain P."/>
            <person name="Malfatti S."/>
            <person name="Shin M."/>
            <person name="Vergez L."/>
            <person name="Schmutz J."/>
            <person name="Larimer F."/>
            <person name="Land M."/>
            <person name="Hauser L."/>
            <person name="Kyrpides N."/>
            <person name="Kim E."/>
            <person name="LiPuma J.J."/>
            <person name="Gonzalez C.F."/>
            <person name="Konstantinidis K."/>
            <person name="Tiedje J.M."/>
            <person name="Richardson P."/>
        </authorList>
    </citation>
    <scope>NUCLEOTIDE SEQUENCE [LARGE SCALE GENOMIC DNA]</scope>
    <source>
        <strain>HI2424</strain>
    </source>
</reference>
<organism>
    <name type="scientific">Burkholderia cenocepacia (strain HI2424)</name>
    <dbReference type="NCBI Taxonomy" id="331272"/>
    <lineage>
        <taxon>Bacteria</taxon>
        <taxon>Pseudomonadati</taxon>
        <taxon>Pseudomonadota</taxon>
        <taxon>Betaproteobacteria</taxon>
        <taxon>Burkholderiales</taxon>
        <taxon>Burkholderiaceae</taxon>
        <taxon>Burkholderia</taxon>
        <taxon>Burkholderia cepacia complex</taxon>
    </lineage>
</organism>
<dbReference type="EMBL" id="CP000458">
    <property type="protein sequence ID" value="ABK07560.1"/>
    <property type="molecule type" value="Genomic_DNA"/>
</dbReference>
<dbReference type="RefSeq" id="WP_011694173.1">
    <property type="nucleotide sequence ID" value="NC_008542.1"/>
</dbReference>
<dbReference type="SMR" id="A0K4Y3"/>
<dbReference type="GeneID" id="83047569"/>
<dbReference type="KEGG" id="bch:Bcen2424_0807"/>
<dbReference type="HOGENOM" id="CLU_108412_0_0_4"/>
<dbReference type="GO" id="GO:0005524">
    <property type="term" value="F:ATP binding"/>
    <property type="evidence" value="ECO:0007669"/>
    <property type="project" value="UniProtKB-KW"/>
</dbReference>
<dbReference type="GO" id="GO:0003677">
    <property type="term" value="F:DNA binding"/>
    <property type="evidence" value="ECO:0007669"/>
    <property type="project" value="UniProtKB-KW"/>
</dbReference>
<dbReference type="GO" id="GO:0008270">
    <property type="term" value="F:zinc ion binding"/>
    <property type="evidence" value="ECO:0007669"/>
    <property type="project" value="UniProtKB-UniRule"/>
</dbReference>
<dbReference type="GO" id="GO:0045892">
    <property type="term" value="P:negative regulation of DNA-templated transcription"/>
    <property type="evidence" value="ECO:0007669"/>
    <property type="project" value="UniProtKB-UniRule"/>
</dbReference>
<dbReference type="HAMAP" id="MF_00440">
    <property type="entry name" value="NrdR"/>
    <property type="match status" value="1"/>
</dbReference>
<dbReference type="InterPro" id="IPR005144">
    <property type="entry name" value="ATP-cone_dom"/>
</dbReference>
<dbReference type="InterPro" id="IPR055173">
    <property type="entry name" value="NrdR-like_N"/>
</dbReference>
<dbReference type="InterPro" id="IPR003796">
    <property type="entry name" value="RNR_NrdR-like"/>
</dbReference>
<dbReference type="NCBIfam" id="TIGR00244">
    <property type="entry name" value="transcriptional regulator NrdR"/>
    <property type="match status" value="1"/>
</dbReference>
<dbReference type="PANTHER" id="PTHR30455">
    <property type="entry name" value="TRANSCRIPTIONAL REPRESSOR NRDR"/>
    <property type="match status" value="1"/>
</dbReference>
<dbReference type="PANTHER" id="PTHR30455:SF2">
    <property type="entry name" value="TRANSCRIPTIONAL REPRESSOR NRDR"/>
    <property type="match status" value="1"/>
</dbReference>
<dbReference type="Pfam" id="PF03477">
    <property type="entry name" value="ATP-cone"/>
    <property type="match status" value="1"/>
</dbReference>
<dbReference type="Pfam" id="PF22811">
    <property type="entry name" value="Zn_ribbon_NrdR"/>
    <property type="match status" value="1"/>
</dbReference>
<dbReference type="PROSITE" id="PS51161">
    <property type="entry name" value="ATP_CONE"/>
    <property type="match status" value="1"/>
</dbReference>
<feature type="chain" id="PRO_1000080720" description="Transcriptional repressor NrdR">
    <location>
        <begin position="1"/>
        <end position="159"/>
    </location>
</feature>
<feature type="domain" description="ATP-cone" evidence="1">
    <location>
        <begin position="49"/>
        <end position="139"/>
    </location>
</feature>
<feature type="zinc finger region" evidence="1">
    <location>
        <begin position="3"/>
        <end position="34"/>
    </location>
</feature>
<sequence length="159" mass="18371">MRCPFCRHDDTQVVDSRVSEDGAAIRRRRRCSACDKRFTTYERVELNLPAVVKKDGSRTEFDRRKIVASMQLALRKRPVAADAIDAAVARIEYQLLATGEREVRSEKLGELVMNELRGLDTIAYVRFASVYRRFEDVSEFADVIEEFRRASPAKTPRKR</sequence>
<proteinExistence type="inferred from homology"/>
<name>NRDR_BURCH</name>
<gene>
    <name evidence="1" type="primary">nrdR</name>
    <name type="ordered locus">Bcen2424_0807</name>
</gene>
<keyword id="KW-0067">ATP-binding</keyword>
<keyword id="KW-0238">DNA-binding</keyword>
<keyword id="KW-0479">Metal-binding</keyword>
<keyword id="KW-0547">Nucleotide-binding</keyword>
<keyword id="KW-0678">Repressor</keyword>
<keyword id="KW-0804">Transcription</keyword>
<keyword id="KW-0805">Transcription regulation</keyword>
<keyword id="KW-0862">Zinc</keyword>
<keyword id="KW-0863">Zinc-finger</keyword>
<comment type="function">
    <text evidence="1">Negatively regulates transcription of bacterial ribonucleotide reductase nrd genes and operons by binding to NrdR-boxes.</text>
</comment>
<comment type="cofactor">
    <cofactor evidence="1">
        <name>Zn(2+)</name>
        <dbReference type="ChEBI" id="CHEBI:29105"/>
    </cofactor>
    <text evidence="1">Binds 1 zinc ion.</text>
</comment>
<comment type="similarity">
    <text evidence="1">Belongs to the NrdR family.</text>
</comment>